<organism>
    <name type="scientific">Pongo abelii</name>
    <name type="common">Sumatran orangutan</name>
    <name type="synonym">Pongo pygmaeus abelii</name>
    <dbReference type="NCBI Taxonomy" id="9601"/>
    <lineage>
        <taxon>Eukaryota</taxon>
        <taxon>Metazoa</taxon>
        <taxon>Chordata</taxon>
        <taxon>Craniata</taxon>
        <taxon>Vertebrata</taxon>
        <taxon>Euteleostomi</taxon>
        <taxon>Mammalia</taxon>
        <taxon>Eutheria</taxon>
        <taxon>Euarchontoglires</taxon>
        <taxon>Primates</taxon>
        <taxon>Haplorrhini</taxon>
        <taxon>Catarrhini</taxon>
        <taxon>Hominidae</taxon>
        <taxon>Pongo</taxon>
    </lineage>
</organism>
<proteinExistence type="evidence at transcript level"/>
<dbReference type="EMBL" id="CR857685">
    <property type="protein sequence ID" value="CAH89955.1"/>
    <property type="molecule type" value="mRNA"/>
</dbReference>
<dbReference type="RefSeq" id="NP_001124917.1">
    <property type="nucleotide sequence ID" value="NM_001131445.1"/>
</dbReference>
<dbReference type="SMR" id="Q5RE52"/>
<dbReference type="FunCoup" id="Q5RE52">
    <property type="interactions" value="3669"/>
</dbReference>
<dbReference type="STRING" id="9601.ENSPPYP00000005751"/>
<dbReference type="Ensembl" id="ENSPPYT00000005971.3">
    <property type="protein sequence ID" value="ENSPPYP00000005751.2"/>
    <property type="gene ID" value="ENSPPYG00000005048.3"/>
</dbReference>
<dbReference type="GeneID" id="100171787"/>
<dbReference type="KEGG" id="pon:100171787"/>
<dbReference type="CTD" id="51433"/>
<dbReference type="eggNOG" id="KOG4322">
    <property type="taxonomic scope" value="Eukaryota"/>
</dbReference>
<dbReference type="GeneTree" id="ENSGT00390000018674"/>
<dbReference type="HOGENOM" id="CLU_020635_0_0_1"/>
<dbReference type="InParanoid" id="Q5RE52"/>
<dbReference type="OMA" id="DANMGMA"/>
<dbReference type="OrthoDB" id="2504561at2759"/>
<dbReference type="TreeFam" id="TF105444"/>
<dbReference type="UniPathway" id="UPA00143"/>
<dbReference type="Proteomes" id="UP000001595">
    <property type="component" value="Chromosome 12"/>
</dbReference>
<dbReference type="GO" id="GO:0005680">
    <property type="term" value="C:anaphase-promoting complex"/>
    <property type="evidence" value="ECO:0000250"/>
    <property type="project" value="UniProtKB"/>
</dbReference>
<dbReference type="GO" id="GO:0005737">
    <property type="term" value="C:cytoplasm"/>
    <property type="evidence" value="ECO:0007669"/>
    <property type="project" value="UniProtKB-KW"/>
</dbReference>
<dbReference type="GO" id="GO:0005634">
    <property type="term" value="C:nucleus"/>
    <property type="evidence" value="ECO:0000250"/>
    <property type="project" value="UniProtKB"/>
</dbReference>
<dbReference type="GO" id="GO:0005819">
    <property type="term" value="C:spindle"/>
    <property type="evidence" value="ECO:0000250"/>
    <property type="project" value="UniProtKB"/>
</dbReference>
<dbReference type="GO" id="GO:0019903">
    <property type="term" value="F:protein phosphatase binding"/>
    <property type="evidence" value="ECO:0007669"/>
    <property type="project" value="Ensembl"/>
</dbReference>
<dbReference type="GO" id="GO:0031145">
    <property type="term" value="P:anaphase-promoting complex-dependent catabolic process"/>
    <property type="evidence" value="ECO:0000250"/>
    <property type="project" value="UniProtKB"/>
</dbReference>
<dbReference type="GO" id="GO:0051301">
    <property type="term" value="P:cell division"/>
    <property type="evidence" value="ECO:0007669"/>
    <property type="project" value="UniProtKB-KW"/>
</dbReference>
<dbReference type="GO" id="GO:0045842">
    <property type="term" value="P:positive regulation of mitotic metaphase/anaphase transition"/>
    <property type="evidence" value="ECO:0007669"/>
    <property type="project" value="TreeGrafter"/>
</dbReference>
<dbReference type="GO" id="GO:0141198">
    <property type="term" value="P:protein branched polyubiquitination"/>
    <property type="evidence" value="ECO:0000250"/>
    <property type="project" value="UniProtKB"/>
</dbReference>
<dbReference type="GO" id="GO:0070979">
    <property type="term" value="P:protein K11-linked ubiquitination"/>
    <property type="evidence" value="ECO:0000250"/>
    <property type="project" value="UniProtKB"/>
</dbReference>
<dbReference type="GO" id="GO:0070936">
    <property type="term" value="P:protein K48-linked ubiquitination"/>
    <property type="evidence" value="ECO:0000250"/>
    <property type="project" value="UniProtKB"/>
</dbReference>
<dbReference type="CDD" id="cd16270">
    <property type="entry name" value="Apc5_N"/>
    <property type="match status" value="1"/>
</dbReference>
<dbReference type="FunFam" id="1.25.40.10:FF:000127">
    <property type="entry name" value="anaphase-promoting complex subunit 5 isoform X1"/>
    <property type="match status" value="1"/>
</dbReference>
<dbReference type="Gene3D" id="1.25.40.10">
    <property type="entry name" value="Tetratricopeptide repeat domain"/>
    <property type="match status" value="1"/>
</dbReference>
<dbReference type="InterPro" id="IPR037679">
    <property type="entry name" value="Apc5"/>
</dbReference>
<dbReference type="InterPro" id="IPR026000">
    <property type="entry name" value="Apc5_dom"/>
</dbReference>
<dbReference type="InterPro" id="IPR048968">
    <property type="entry name" value="Apc5_N"/>
</dbReference>
<dbReference type="InterPro" id="IPR011990">
    <property type="entry name" value="TPR-like_helical_dom_sf"/>
</dbReference>
<dbReference type="InterPro" id="IPR019734">
    <property type="entry name" value="TPR_rpt"/>
</dbReference>
<dbReference type="PANTHER" id="PTHR12830">
    <property type="entry name" value="ANAPHASE-PROMOTING COMPLEX SUBUNIT 5"/>
    <property type="match status" value="1"/>
</dbReference>
<dbReference type="PANTHER" id="PTHR12830:SF9">
    <property type="entry name" value="ANAPHASE-PROMOTING COMPLEX SUBUNIT 5"/>
    <property type="match status" value="1"/>
</dbReference>
<dbReference type="Pfam" id="PF12862">
    <property type="entry name" value="ANAPC5"/>
    <property type="match status" value="2"/>
</dbReference>
<dbReference type="Pfam" id="PF21371">
    <property type="entry name" value="Apc5_N"/>
    <property type="match status" value="1"/>
</dbReference>
<dbReference type="SMART" id="SM00028">
    <property type="entry name" value="TPR"/>
    <property type="match status" value="4"/>
</dbReference>
<dbReference type="SUPFAM" id="SSF48452">
    <property type="entry name" value="TPR-like"/>
    <property type="match status" value="2"/>
</dbReference>
<gene>
    <name type="primary">ANAPC5</name>
</gene>
<sequence length="755" mass="85077">MASVHESLYFNPMMTNGVVHANVFGIKDWVTPYKIAVLVLLNEMSRTGEGAVSLMERRRLNQLLLPLLQGPDITLSKLYKLIEESCPQLANSVQIRIKLMAEGELKDMEQFFDDLSDSFSGTEPEVHKTSVVGLFLRHMILAYSKLSFSQVFKLYTALQQYFQNGEKKTVEDADMELTSRDEGERKMEKEELDVSVREEEVSCSGPLSQKQAEFFLSQQASLLKNDETKALTPASLQKELNNLLKFNPDFAEAHYLSYLNNLRVQDVFSSTHSLLHYFDRLILTGAESKSNGEEGYGRSLRYAALNLAALHCRFGHYQQAELALQEAIRIAQESNDHVCLQHCLSWLYVLGQKRSDSYVLLEHSVKKAVHFGLPYLASLGIQSLVQQRAFAGKTANKLMDALKDSDLLHWKHSLSELIDISIAQKTAIWRLYGRSTMALQQAQMLLSMNSLEAVNAGVQQNNTESFAVALCHLAELHAEQGCFAAASEVLKHLKERFPPNSQHAQLWMLCDQKIQFDRAMNDGKYHLADSLVTGITALNSIEGVYRKAVVLQAQNQMSEAHKLLQKLLVHCQKLKNTEMVISVLLSVAELYWRSSSPTIALPMLLQALALSKEYRLQYLASETVLNLAFAQLILGIPEQALSLLHMAIEPILADGAILDKGRAMFLVAKCQVASAASYDQPKKAEALEAAIENLNEAKNYFAKVDCKERIRDVVYFQARLYHTLGKTQERNRCAMLFRQLHQELPSHGVPLINHL</sequence>
<feature type="chain" id="PRO_0000307376" description="Anaphase-promoting complex subunit 5">
    <location>
        <begin position="1"/>
        <end position="755"/>
    </location>
</feature>
<feature type="repeat" description="TPR 1">
    <location>
        <begin position="209"/>
        <end position="249"/>
    </location>
</feature>
<feature type="repeat" description="TPR 2">
    <location>
        <begin position="250"/>
        <end position="300"/>
    </location>
</feature>
<feature type="repeat" description="TPR 3">
    <location>
        <begin position="301"/>
        <end position="337"/>
    </location>
</feature>
<feature type="repeat" description="TPR 4">
    <location>
        <begin position="338"/>
        <end position="378"/>
    </location>
</feature>
<feature type="repeat" description="TPR 5">
    <location>
        <begin position="379"/>
        <end position="418"/>
    </location>
</feature>
<feature type="repeat" description="TPR 6">
    <location>
        <begin position="419"/>
        <end position="466"/>
    </location>
</feature>
<feature type="repeat" description="TPR 7">
    <location>
        <begin position="467"/>
        <end position="500"/>
    </location>
</feature>
<feature type="repeat" description="TPR 8">
    <location>
        <begin position="501"/>
        <end position="540"/>
    </location>
</feature>
<feature type="repeat" description="TPR 9">
    <location>
        <begin position="541"/>
        <end position="580"/>
    </location>
</feature>
<feature type="repeat" description="TPR 10">
    <location>
        <begin position="581"/>
        <end position="620"/>
    </location>
</feature>
<feature type="repeat" description="TPR 11">
    <location>
        <begin position="621"/>
        <end position="660"/>
    </location>
</feature>
<feature type="repeat" description="TPR 12">
    <location>
        <begin position="661"/>
        <end position="696"/>
    </location>
</feature>
<feature type="repeat" description="TPR 13">
    <location>
        <begin position="697"/>
        <end position="736"/>
    </location>
</feature>
<feature type="modified residue" description="Phosphoserine" evidence="1">
    <location>
        <position position="195"/>
    </location>
</feature>
<feature type="modified residue" description="Phosphothreonine" evidence="1">
    <location>
        <position position="232"/>
    </location>
</feature>
<protein>
    <recommendedName>
        <fullName>Anaphase-promoting complex subunit 5</fullName>
        <shortName>APC5</shortName>
    </recommendedName>
    <alternativeName>
        <fullName>Cyclosome subunit 5</fullName>
    </alternativeName>
</protein>
<keyword id="KW-0131">Cell cycle</keyword>
<keyword id="KW-0132">Cell division</keyword>
<keyword id="KW-0963">Cytoplasm</keyword>
<keyword id="KW-0206">Cytoskeleton</keyword>
<keyword id="KW-0498">Mitosis</keyword>
<keyword id="KW-0539">Nucleus</keyword>
<keyword id="KW-0597">Phosphoprotein</keyword>
<keyword id="KW-1185">Reference proteome</keyword>
<keyword id="KW-0677">Repeat</keyword>
<keyword id="KW-0802">TPR repeat</keyword>
<keyword id="KW-0833">Ubl conjugation pathway</keyword>
<comment type="function">
    <text evidence="1">Component of the anaphase promoting complex/cyclosome (APC/C), a cell cycle-regulated E3 ubiquitin ligase that controls progression through mitosis and the G1 phase of the cell cycle. The APC/C complex acts by mediating ubiquitination and subsequent degradation of target proteins: it mainly mediates the formation of 'Lys-11'-linked polyubiquitin chains and, to a lower extent, the formation of 'Lys-48'- and 'Lys-63'-linked polyubiquitin chains. The APC/C complex catalyzes assembly of branched 'Lys-11'-/'Lys-48'-linked branched ubiquitin chains on target proteins.</text>
</comment>
<comment type="pathway">
    <text evidence="1">Protein modification; protein ubiquitination.</text>
</comment>
<comment type="subunit">
    <text evidence="1">The mammalian APC/C is composed at least of 14 distinct subunits ANAPC1, ANAPC2, CDC27/APC3, ANAPC4, ANAPC5, CDC16/APC6, ANAPC7, CDC23/APC8, ANAPC10, ANAPC11, CDC26/APC12, ANAPC13, ANAPC15 and ANAPC16 that assemble into a complex of at least 19 chains with a combined molecular mass of around 1.2 MDa; APC/C interacts with FZR1 and FBXO5.</text>
</comment>
<comment type="subcellular location">
    <subcellularLocation>
        <location evidence="1">Nucleus</location>
    </subcellularLocation>
    <subcellularLocation>
        <location evidence="1">Cytoplasm</location>
        <location evidence="1">Cytoskeleton</location>
        <location evidence="1">Spindle</location>
    </subcellularLocation>
</comment>
<comment type="similarity">
    <text evidence="2">Belongs to the APC5 family.</text>
</comment>
<name>APC5_PONAB</name>
<accession>Q5RE52</accession>
<evidence type="ECO:0000250" key="1">
    <source>
        <dbReference type="UniProtKB" id="Q9UJX4"/>
    </source>
</evidence>
<evidence type="ECO:0000305" key="2"/>
<reference key="1">
    <citation type="submission" date="2004-11" db="EMBL/GenBank/DDBJ databases">
        <authorList>
            <consortium name="The German cDNA consortium"/>
        </authorList>
    </citation>
    <scope>NUCLEOTIDE SEQUENCE [LARGE SCALE MRNA]</scope>
    <source>
        <tissue>Heart</tissue>
    </source>
</reference>